<proteinExistence type="inferred from homology"/>
<gene>
    <name evidence="2" type="primary">ATG9</name>
    <name evidence="2" type="synonym">APG9</name>
    <name evidence="2" type="synonym">AUT9</name>
    <name evidence="2" type="synonym">CVT7</name>
    <name evidence="5" type="ORF">SCY_0766</name>
</gene>
<reference key="1">
    <citation type="journal article" date="2007" name="Proc. Natl. Acad. Sci. U.S.A.">
        <title>Genome sequencing and comparative analysis of Saccharomyces cerevisiae strain YJM789.</title>
        <authorList>
            <person name="Wei W."/>
            <person name="McCusker J.H."/>
            <person name="Hyman R.W."/>
            <person name="Jones T."/>
            <person name="Ning Y."/>
            <person name="Cao Z."/>
            <person name="Gu Z."/>
            <person name="Bruno D."/>
            <person name="Miranda M."/>
            <person name="Nguyen M."/>
            <person name="Wilhelmy J."/>
            <person name="Komp C."/>
            <person name="Tamse R."/>
            <person name="Wang X."/>
            <person name="Jia P."/>
            <person name="Luedi P."/>
            <person name="Oefner P.J."/>
            <person name="David L."/>
            <person name="Dietrich F.S."/>
            <person name="Li Y."/>
            <person name="Davis R.W."/>
            <person name="Steinmetz L.M."/>
        </authorList>
    </citation>
    <scope>NUCLEOTIDE SEQUENCE [LARGE SCALE GENOMIC DNA]</scope>
    <source>
        <strain>YJM789</strain>
    </source>
</reference>
<comment type="function">
    <text evidence="2">Phospholipid scramblase involved in autophagy and cytoplasm to vacuole transport (Cvt) vesicle formation. Cycles between the preautophagosomal structure/phagophore assembly site (PAS) and the cytoplasmic vesicle pool and supplies membrane for the growing autophagosome. Lipid scramblase activity plays a key role in preautophagosomal structure/phagophore assembly by distributing the phospholipids that arrive through ATG2 from the cytoplasmic to the luminal leaflet of the bilayer, thereby driving autophagosomal membrane expansion. Required for mitophagy. Also involved in endoplasmic reticulum-specific autophagic process and is essential for the survival of cells subjected to severe ER stress. Different machineries are required for anterograde trafficking to the PAS during either the Cvt pathway or bulk autophagy and for retrograde trafficking. Recruits vesicle-tethering proteins TRS85 and YPT1 to the autophagosome formation site. Also recruits ATG23 and ATG8 to the PAS.</text>
</comment>
<comment type="catalytic activity">
    <reaction evidence="2">
        <text>a 1,2-diacyl-sn-glycero-3-phosphocholine(in) = a 1,2-diacyl-sn-glycero-3-phosphocholine(out)</text>
        <dbReference type="Rhea" id="RHEA:38571"/>
        <dbReference type="ChEBI" id="CHEBI:57643"/>
    </reaction>
</comment>
<comment type="catalytic activity">
    <reaction evidence="2">
        <text>a 1,2-diacyl-sn-glycero-3-phospho-L-serine(in) = a 1,2-diacyl-sn-glycero-3-phospho-L-serine(out)</text>
        <dbReference type="Rhea" id="RHEA:38663"/>
        <dbReference type="ChEBI" id="CHEBI:57262"/>
    </reaction>
</comment>
<comment type="catalytic activity">
    <reaction evidence="2">
        <text>a 1,2-diacyl-sn-glycero-3-phosphoethanolamine(in) = a 1,2-diacyl-sn-glycero-3-phosphoethanolamine(out)</text>
        <dbReference type="Rhea" id="RHEA:38895"/>
        <dbReference type="ChEBI" id="CHEBI:64612"/>
    </reaction>
</comment>
<comment type="catalytic activity">
    <reaction evidence="2">
        <text>a 1,2-diacyl-sn-glycero-3-phospho-(1D-myo-inositol-3-phosphate)(in) = a 1,2-diacyl-sn-glycero-3-phospho-(1D-myo-inositol-3-phosphate)(out)</text>
        <dbReference type="Rhea" id="RHEA:67920"/>
        <dbReference type="ChEBI" id="CHEBI:58088"/>
    </reaction>
</comment>
<comment type="subunit">
    <text evidence="2">Homotrimer; forms a homotrimer with a central pore that forms a path between the two membrane leaflets. Interacts with ATG23 and ATG27 to form a cycling complex for trafficking to the PAS. Interacts (via N-terminus) with ATG11, required for recruitment of ATG9 to the PAS for the Cvt pathway during nutrient-rich conditions. Interacts (via N-terminus) with ATG17; required for recruitment to the PAS during autophagy and starved conditions. Interacts with ATG2 and ATG18; required for the retrieval of ATG9 from the PAS to the cytoplasmic pool. Interacts with ATG41. Interacts with the conserved oligomeric Golgi (COG) complex subunits COG3 and COG4. Interacts with TRS85.</text>
</comment>
<comment type="subcellular location">
    <subcellularLocation>
        <location evidence="2">Preautophagosomal structure membrane</location>
        <topology evidence="2">Multi-pass membrane protein</topology>
    </subcellularLocation>
    <subcellularLocation>
        <location evidence="2">Cytoplasmic vesicle membrane</location>
        <topology evidence="2">Multi-pass membrane protein</topology>
    </subcellularLocation>
    <subcellularLocation>
        <location evidence="2">Golgi apparatus membrane</location>
        <topology evidence="2">Multi-pass membrane protein</topology>
    </subcellularLocation>
    <subcellularLocation>
        <location evidence="2">Endoplasmic reticulum membrane</location>
        <topology evidence="2">Multi-pass membrane protein</topology>
    </subcellularLocation>
    <subcellularLocation>
        <location evidence="2">Mitochondrion membrane</location>
        <topology evidence="2">Multi-pass membrane protein</topology>
    </subcellularLocation>
    <text evidence="2">The vast majority of ATG9 exists on cytoplasmic mobile vesicles (designated ATG9 vesicles) that were derived from the Golgi apparatus in a process involving ATG23 and ATG27. The peripheral pool of ATG9 partially colocalizes within tubulovesicular clusters adjacent to mitochondria. It appears that membrane that contains ATG9 is delivered to the autophagosome from the Golgi-endosomal system rather than from the ER or mitochondria. Within the PAS, localizes at the edge of the isolation membrane. ATG9 cycling is regulated by at least the conserved oligomeric Golgi (COG) complex, ARP2, HOG1, PIK1, SEC2, SEC9, SSO1 and SSO2.</text>
</comment>
<comment type="domain">
    <text evidence="1">Forms a homotrimer with a solvated central pore, which is connected laterally to the cytosol through the cavity within each protomer. Acts as a lipid scramblase that uses its central pore to function: the central pore opens laterally to accommodate lipid headgroups, thereby enabling lipid flipping and redistribution of lipids added to the outer leaflet of ATG9-containing vesicles, thereby enabling growth into autophagosomes.</text>
</comment>
<comment type="PTM">
    <text evidence="2">Phosphorylated by ATG1; phosphorylation is required for autophagy and cytoplasm to vacuole transport (Cvt) vesicle formation. Phosphorylation by ATG1 regulates ATG18 interaction and preautophagosome elongation. Phosphorylation at Ser-122 is required for selective autophagy by regulating anterograde trafficking and interaction with ATG23 and ATG27. Phosphorylation at Ser-122 prevents ubiquitination by the SCF(MET30) complex.</text>
</comment>
<comment type="PTM">
    <text evidence="2">Ubiquitinated by the SCF(MET30) complex in normal conditions, leading to its degradation by the proteasome, thereby preventing inappropriate induction of autophagy. Ubiquitination by the SCF(MET30) complex is prevented by phosphorylation at Ser-122.</text>
</comment>
<comment type="similarity">
    <text evidence="6">Belongs to the ATG9 family.</text>
</comment>
<dbReference type="EMBL" id="AAFW02000145">
    <property type="protein sequence ID" value="EDN60208.1"/>
    <property type="molecule type" value="Genomic_DNA"/>
</dbReference>
<dbReference type="SMR" id="A6ZXH8"/>
<dbReference type="HOGENOM" id="CLU_006200_1_0_1"/>
<dbReference type="OrthoDB" id="35151at4893"/>
<dbReference type="Proteomes" id="UP000007060">
    <property type="component" value="Unassembled WGS sequence"/>
</dbReference>
<dbReference type="GO" id="GO:0005776">
    <property type="term" value="C:autophagosome"/>
    <property type="evidence" value="ECO:0007669"/>
    <property type="project" value="TreeGrafter"/>
</dbReference>
<dbReference type="GO" id="GO:0030659">
    <property type="term" value="C:cytoplasmic vesicle membrane"/>
    <property type="evidence" value="ECO:0007669"/>
    <property type="project" value="UniProtKB-SubCell"/>
</dbReference>
<dbReference type="GO" id="GO:0005789">
    <property type="term" value="C:endoplasmic reticulum membrane"/>
    <property type="evidence" value="ECO:0007669"/>
    <property type="project" value="UniProtKB-SubCell"/>
</dbReference>
<dbReference type="GO" id="GO:0000139">
    <property type="term" value="C:Golgi membrane"/>
    <property type="evidence" value="ECO:0007669"/>
    <property type="project" value="UniProtKB-SubCell"/>
</dbReference>
<dbReference type="GO" id="GO:0031966">
    <property type="term" value="C:mitochondrial membrane"/>
    <property type="evidence" value="ECO:0007669"/>
    <property type="project" value="UniProtKB-SubCell"/>
</dbReference>
<dbReference type="GO" id="GO:0034045">
    <property type="term" value="C:phagophore assembly site membrane"/>
    <property type="evidence" value="ECO:0007669"/>
    <property type="project" value="UniProtKB-SubCell"/>
</dbReference>
<dbReference type="GO" id="GO:0000422">
    <property type="term" value="P:autophagy of mitochondrion"/>
    <property type="evidence" value="ECO:0007669"/>
    <property type="project" value="TreeGrafter"/>
</dbReference>
<dbReference type="GO" id="GO:0006869">
    <property type="term" value="P:lipid transport"/>
    <property type="evidence" value="ECO:0007669"/>
    <property type="project" value="UniProtKB-KW"/>
</dbReference>
<dbReference type="GO" id="GO:0034727">
    <property type="term" value="P:piecemeal microautophagy of the nucleus"/>
    <property type="evidence" value="ECO:0007669"/>
    <property type="project" value="TreeGrafter"/>
</dbReference>
<dbReference type="GO" id="GO:0034497">
    <property type="term" value="P:protein localization to phagophore assembly site"/>
    <property type="evidence" value="ECO:0007669"/>
    <property type="project" value="TreeGrafter"/>
</dbReference>
<dbReference type="GO" id="GO:0061709">
    <property type="term" value="P:reticulophagy"/>
    <property type="evidence" value="ECO:0007669"/>
    <property type="project" value="TreeGrafter"/>
</dbReference>
<dbReference type="InterPro" id="IPR007241">
    <property type="entry name" value="Autophagy-rel_prot_9"/>
</dbReference>
<dbReference type="PANTHER" id="PTHR13038">
    <property type="entry name" value="APG9 AUTOPHAGY 9"/>
    <property type="match status" value="1"/>
</dbReference>
<dbReference type="PANTHER" id="PTHR13038:SF10">
    <property type="entry name" value="AUTOPHAGY-RELATED PROTEIN 9"/>
    <property type="match status" value="1"/>
</dbReference>
<dbReference type="Pfam" id="PF04109">
    <property type="entry name" value="ATG9"/>
    <property type="match status" value="1"/>
</dbReference>
<sequence>MERDEYQLPNSHGKNTFLSRIFGLQSDEVNPSLNSQEMSNFPLPDIERGSSLLHSTNDSREDVDENDLRVPESDQGTSTEEEDEVDEEQVQAYAPQISDGLNGDHQLNSVTSKENVLETEKSNLERLVEGSTDDSVPKVGQLSSEEEEDNEFINNDGFDDDTPLFQKSKIHEFSSKKSNTIEDGKRPLFFRHIYQNNRPQRDTQKLFTSSNAIHHDKDKSANNGPRNINGNQKHGTKYFGSATQPRFTGSPLNNTNRFTKLFPLRKPNLLSNISVLNNTPEDRINTLSVKERALWKWANVENLDIFLQDVYNYYLGNGFYCIILEKILNICTLLFVVFVSTYMGHCVDYSKLPTSHRVSDIIIDKCYSNSITGFTKFFLWMFYFFVILKIVQLYFDVQKLSELQNFYKYLLNISDDELQTLPWQNVIQQLMYLKDQNAMTANVVEVKAKNRIDAHDVANRIMRRENYLIALYNSDILNLSLPIPLFRTNVLTKTLEWNINLCVMGFVFNESGFIKQSILKPSQREFTREELQKRFMLAGFLNIILAPFLVTYFVLLYFFRYFNEYKTSPGSIGARQYTPIAEWKFREYNELYHIFKKRISLSTTLANKYVDQFPKEKTNLFLKFVSFICGSFVAILAFLTVFDPENFLNFEITSDRSVIFYITILGAIWSVSRNTITQEYHVFDPEETLKELYEYTHYLPKEWEGRYHKEEIKLEFCKLYNLRIVILLRELTSLMITPFVLWFSLPSSAGRIVDFFRENSEYVDGLGYVCKYAMFNMKNIDGEDTHSMDEDSLTKKIAVNGSHTLNSKRRSKFTAEDHSDKDLANNKMLQSYVYFMDDYSNSENLTGKYQLPAKKGYPNNEGDSFLNNKYSWRKQFQPGQKPELFRIGKHALGPGHNISPAIYSTRNPGKNWDNNNNGDDIKNGTNNATAKNDDNNGNNDHEYVLTESFLDSGAFPNHDVIDHNKMLNSNYNGNGILNKGGVLGLVKEYYKKSDVGR</sequence>
<organism>
    <name type="scientific">Saccharomyces cerevisiae (strain YJM789)</name>
    <name type="common">Baker's yeast</name>
    <dbReference type="NCBI Taxonomy" id="307796"/>
    <lineage>
        <taxon>Eukaryota</taxon>
        <taxon>Fungi</taxon>
        <taxon>Dikarya</taxon>
        <taxon>Ascomycota</taxon>
        <taxon>Saccharomycotina</taxon>
        <taxon>Saccharomycetes</taxon>
        <taxon>Saccharomycetales</taxon>
        <taxon>Saccharomycetaceae</taxon>
        <taxon>Saccharomyces</taxon>
    </lineage>
</organism>
<protein>
    <recommendedName>
        <fullName evidence="2">Autophagy-related protein 9</fullName>
    </recommendedName>
    <alternativeName>
        <fullName evidence="2">Cytoplasm to vacuole targeting protein 7</fullName>
    </alternativeName>
</protein>
<keyword id="KW-0072">Autophagy</keyword>
<keyword id="KW-0968">Cytoplasmic vesicle</keyword>
<keyword id="KW-0256">Endoplasmic reticulum</keyword>
<keyword id="KW-0333">Golgi apparatus</keyword>
<keyword id="KW-1017">Isopeptide bond</keyword>
<keyword id="KW-0445">Lipid transport</keyword>
<keyword id="KW-0472">Membrane</keyword>
<keyword id="KW-0496">Mitochondrion</keyword>
<keyword id="KW-0597">Phosphoprotein</keyword>
<keyword id="KW-0812">Transmembrane</keyword>
<keyword id="KW-1133">Transmembrane helix</keyword>
<keyword id="KW-0813">Transport</keyword>
<keyword id="KW-0832">Ubl conjugation</keyword>
<feature type="chain" id="PRO_0000317919" description="Autophagy-related protein 9">
    <location>
        <begin position="1"/>
        <end position="997"/>
    </location>
</feature>
<feature type="topological domain" description="Cytoplasmic" evidence="6">
    <location>
        <begin position="1"/>
        <end position="318"/>
    </location>
</feature>
<feature type="transmembrane region" description="Helical" evidence="3">
    <location>
        <begin position="319"/>
        <end position="339"/>
    </location>
</feature>
<feature type="topological domain" description="Lumenal" evidence="6">
    <location>
        <begin position="340"/>
        <end position="376"/>
    </location>
</feature>
<feature type="transmembrane region" description="Helical" evidence="3">
    <location>
        <begin position="377"/>
        <end position="397"/>
    </location>
</feature>
<feature type="topological domain" description="Cytoplasmic" evidence="6">
    <location>
        <begin position="398"/>
        <end position="538"/>
    </location>
</feature>
<feature type="intramembrane region" evidence="1">
    <location>
        <begin position="539"/>
        <end position="559"/>
    </location>
</feature>
<feature type="topological domain" description="Cytoplasmic" evidence="6">
    <location>
        <begin position="560"/>
        <end position="620"/>
    </location>
</feature>
<feature type="transmembrane region" description="Helical" evidence="3">
    <location>
        <begin position="621"/>
        <end position="641"/>
    </location>
</feature>
<feature type="topological domain" description="Lumenal" evidence="6">
    <location>
        <begin position="642"/>
        <end position="656"/>
    </location>
</feature>
<feature type="transmembrane region" description="Helical" evidence="3">
    <location>
        <begin position="657"/>
        <end position="677"/>
    </location>
</feature>
<feature type="topological domain" description="Cytoplasmic" evidence="6">
    <location>
        <begin position="678"/>
        <end position="723"/>
    </location>
</feature>
<feature type="intramembrane region" evidence="1">
    <location>
        <begin position="724"/>
        <end position="744"/>
    </location>
</feature>
<feature type="topological domain" description="Cytoplasmic" evidence="6">
    <location>
        <begin position="745"/>
        <end position="997"/>
    </location>
</feature>
<feature type="region of interest" description="Disordered" evidence="4">
    <location>
        <begin position="29"/>
        <end position="88"/>
    </location>
</feature>
<feature type="region of interest" description="Disordered" evidence="4">
    <location>
        <begin position="127"/>
        <end position="159"/>
    </location>
</feature>
<feature type="region of interest" description="Disordered" evidence="4">
    <location>
        <begin position="214"/>
        <end position="234"/>
    </location>
</feature>
<feature type="compositionally biased region" description="Polar residues" evidence="4">
    <location>
        <begin position="29"/>
        <end position="39"/>
    </location>
</feature>
<feature type="compositionally biased region" description="Acidic residues" evidence="4">
    <location>
        <begin position="79"/>
        <end position="88"/>
    </location>
</feature>
<feature type="compositionally biased region" description="Acidic residues" evidence="4">
    <location>
        <begin position="144"/>
        <end position="159"/>
    </location>
</feature>
<feature type="compositionally biased region" description="Polar residues" evidence="4">
    <location>
        <begin position="221"/>
        <end position="233"/>
    </location>
</feature>
<feature type="modified residue" description="Phosphoserine" evidence="2">
    <location>
        <position position="19"/>
    </location>
</feature>
<feature type="modified residue" description="Phosphoserine" evidence="2">
    <location>
        <position position="122"/>
    </location>
</feature>
<feature type="modified residue" description="Phosphoserine" evidence="2">
    <location>
        <position position="143"/>
    </location>
</feature>
<feature type="modified residue" description="Phosphoserine" evidence="2">
    <location>
        <position position="144"/>
    </location>
</feature>
<feature type="modified residue" description="Phosphoserine" evidence="2">
    <location>
        <position position="657"/>
    </location>
</feature>
<feature type="modified residue" description="Phosphoserine" evidence="2">
    <location>
        <position position="787"/>
    </location>
</feature>
<feature type="modified residue" description="Phosphoserine" evidence="2">
    <location>
        <position position="792"/>
    </location>
</feature>
<feature type="modified residue" description="Phosphothreonine" evidence="2">
    <location>
        <position position="794"/>
    </location>
</feature>
<feature type="modified residue" description="Phosphoserine" evidence="2">
    <location>
        <position position="802"/>
    </location>
</feature>
<feature type="modified residue" description="Phosphothreonine" evidence="2">
    <location>
        <position position="804"/>
    </location>
</feature>
<feature type="modified residue" description="Phosphoserine" evidence="2">
    <location>
        <position position="831"/>
    </location>
</feature>
<feature type="modified residue" description="Phosphoserine" evidence="2">
    <location>
        <position position="842"/>
    </location>
</feature>
<feature type="modified residue" description="Phosphoserine" evidence="2">
    <location>
        <position position="864"/>
    </location>
</feature>
<feature type="modified residue" description="Phosphoserine" evidence="2">
    <location>
        <position position="948"/>
    </location>
</feature>
<feature type="modified residue" description="Phosphoserine" evidence="2">
    <location>
        <position position="969"/>
    </location>
</feature>
<feature type="cross-link" description="Glycyl lysine isopeptide (Lys-Gly) (interchain with G-Cter in ubiquitin)" evidence="2">
    <location>
        <position position="113"/>
    </location>
</feature>
<feature type="cross-link" description="Glycyl lysine isopeptide (Lys-Gly) (interchain with G-Cter in ubiquitin)" evidence="2">
    <location>
        <position position="121"/>
    </location>
</feature>
<feature type="cross-link" description="Glycyl lysine isopeptide (Lys-Gly) (interchain with G-Cter in ubiquitin)" evidence="2">
    <location>
        <position position="138"/>
    </location>
</feature>
<feature type="cross-link" description="Glycyl lysine isopeptide (Lys-Gly) (interchain with G-Cter in ubiquitin)" evidence="2">
    <location>
        <position position="701"/>
    </location>
</feature>
<name>ATG9_YEAS7</name>
<evidence type="ECO:0000250" key="1">
    <source>
        <dbReference type="UniProtKB" id="O74312"/>
    </source>
</evidence>
<evidence type="ECO:0000250" key="2">
    <source>
        <dbReference type="UniProtKB" id="Q12142"/>
    </source>
</evidence>
<evidence type="ECO:0000255" key="3"/>
<evidence type="ECO:0000256" key="4">
    <source>
        <dbReference type="SAM" id="MobiDB-lite"/>
    </source>
</evidence>
<evidence type="ECO:0000303" key="5">
    <source>
    </source>
</evidence>
<evidence type="ECO:0000305" key="6"/>
<accession>A6ZXH8</accession>